<protein>
    <recommendedName>
        <fullName evidence="1">Protoheme IX farnesyltransferase</fullName>
        <ecNumber evidence="1">2.5.1.141</ecNumber>
    </recommendedName>
    <alternativeName>
        <fullName evidence="1">Heme B farnesyltransferase</fullName>
    </alternativeName>
    <alternativeName>
        <fullName evidence="1">Heme O synthase</fullName>
    </alternativeName>
</protein>
<sequence>MNKDQTLSHTTGRVSFKELQQIIKMGLVQGNLIPAFAGAWLAIVMTNHSFLSSIPQILLMLVGSTLIMGGACALNNYYDQDIDRIMPSKQSRPTVNDRISDRNLLMLSFGMMLIGEACLFLLNIPSGVLGLIGIVGYVSYYSIWSKRHTTWNTVVGSFPGAVPPLIGWVAIDGSLSLAAVALFLVVFCWQPIHFYALAIKRSDEYALANIPMLPSVKGFKRTRVSMFIWLVLLLPLPFLLSNLGVTFVVIATLLNLGWLALGFTTFRKESNQTKWATQMFVYSLNYLVVFFALVVVVSLIKMI</sequence>
<name>COXX_STAEQ</name>
<reference key="1">
    <citation type="journal article" date="2005" name="J. Bacteriol.">
        <title>Insights on evolution of virulence and resistance from the complete genome analysis of an early methicillin-resistant Staphylococcus aureus strain and a biofilm-producing methicillin-resistant Staphylococcus epidermidis strain.</title>
        <authorList>
            <person name="Gill S.R."/>
            <person name="Fouts D.E."/>
            <person name="Archer G.L."/>
            <person name="Mongodin E.F."/>
            <person name="DeBoy R.T."/>
            <person name="Ravel J."/>
            <person name="Paulsen I.T."/>
            <person name="Kolonay J.F."/>
            <person name="Brinkac L.M."/>
            <person name="Beanan M.J."/>
            <person name="Dodson R.J."/>
            <person name="Daugherty S.C."/>
            <person name="Madupu R."/>
            <person name="Angiuoli S.V."/>
            <person name="Durkin A.S."/>
            <person name="Haft D.H."/>
            <person name="Vamathevan J.J."/>
            <person name="Khouri H."/>
            <person name="Utterback T.R."/>
            <person name="Lee C."/>
            <person name="Dimitrov G."/>
            <person name="Jiang L."/>
            <person name="Qin H."/>
            <person name="Weidman J."/>
            <person name="Tran K."/>
            <person name="Kang K.H."/>
            <person name="Hance I.R."/>
            <person name="Nelson K.E."/>
            <person name="Fraser C.M."/>
        </authorList>
    </citation>
    <scope>NUCLEOTIDE SEQUENCE [LARGE SCALE GENOMIC DNA]</scope>
    <source>
        <strain>ATCC 35984 / DSM 28319 / BCRC 17069 / CCUG 31568 / BM 3577 / RP62A</strain>
    </source>
</reference>
<gene>
    <name evidence="1" type="primary">ctaB</name>
    <name type="ordered locus">SERP0706</name>
</gene>
<keyword id="KW-1003">Cell membrane</keyword>
<keyword id="KW-0350">Heme biosynthesis</keyword>
<keyword id="KW-0472">Membrane</keyword>
<keyword id="KW-1185">Reference proteome</keyword>
<keyword id="KW-0808">Transferase</keyword>
<keyword id="KW-0812">Transmembrane</keyword>
<keyword id="KW-1133">Transmembrane helix</keyword>
<organism>
    <name type="scientific">Staphylococcus epidermidis (strain ATCC 35984 / DSM 28319 / BCRC 17069 / CCUG 31568 / BM 3577 / RP62A)</name>
    <dbReference type="NCBI Taxonomy" id="176279"/>
    <lineage>
        <taxon>Bacteria</taxon>
        <taxon>Bacillati</taxon>
        <taxon>Bacillota</taxon>
        <taxon>Bacilli</taxon>
        <taxon>Bacillales</taxon>
        <taxon>Staphylococcaceae</taxon>
        <taxon>Staphylococcus</taxon>
    </lineage>
</organism>
<dbReference type="EC" id="2.5.1.141" evidence="1"/>
<dbReference type="EMBL" id="CP000029">
    <property type="protein sequence ID" value="AAW54113.1"/>
    <property type="molecule type" value="Genomic_DNA"/>
</dbReference>
<dbReference type="SMR" id="Q5HQ51"/>
<dbReference type="STRING" id="176279.SERP0706"/>
<dbReference type="KEGG" id="ser:SERP0706"/>
<dbReference type="eggNOG" id="COG0109">
    <property type="taxonomic scope" value="Bacteria"/>
</dbReference>
<dbReference type="HOGENOM" id="CLU_029631_0_0_9"/>
<dbReference type="UniPathway" id="UPA00834">
    <property type="reaction ID" value="UER00712"/>
</dbReference>
<dbReference type="Proteomes" id="UP000000531">
    <property type="component" value="Chromosome"/>
</dbReference>
<dbReference type="GO" id="GO:0005886">
    <property type="term" value="C:plasma membrane"/>
    <property type="evidence" value="ECO:0007669"/>
    <property type="project" value="UniProtKB-SubCell"/>
</dbReference>
<dbReference type="GO" id="GO:0008495">
    <property type="term" value="F:protoheme IX farnesyltransferase activity"/>
    <property type="evidence" value="ECO:0007669"/>
    <property type="project" value="UniProtKB-UniRule"/>
</dbReference>
<dbReference type="GO" id="GO:0048034">
    <property type="term" value="P:heme O biosynthetic process"/>
    <property type="evidence" value="ECO:0007669"/>
    <property type="project" value="UniProtKB-UniRule"/>
</dbReference>
<dbReference type="CDD" id="cd13957">
    <property type="entry name" value="PT_UbiA_Cox10"/>
    <property type="match status" value="1"/>
</dbReference>
<dbReference type="Gene3D" id="1.10.357.140">
    <property type="entry name" value="UbiA prenyltransferase"/>
    <property type="match status" value="1"/>
</dbReference>
<dbReference type="HAMAP" id="MF_00154">
    <property type="entry name" value="CyoE_CtaB"/>
    <property type="match status" value="1"/>
</dbReference>
<dbReference type="InterPro" id="IPR006369">
    <property type="entry name" value="Protohaem_IX_farnesylTrfase"/>
</dbReference>
<dbReference type="InterPro" id="IPR000537">
    <property type="entry name" value="UbiA_prenyltransferase"/>
</dbReference>
<dbReference type="InterPro" id="IPR044878">
    <property type="entry name" value="UbiA_sf"/>
</dbReference>
<dbReference type="NCBIfam" id="TIGR01473">
    <property type="entry name" value="cyoE_ctaB"/>
    <property type="match status" value="1"/>
</dbReference>
<dbReference type="PANTHER" id="PTHR43448">
    <property type="entry name" value="PROTOHEME IX FARNESYLTRANSFERASE, MITOCHONDRIAL"/>
    <property type="match status" value="1"/>
</dbReference>
<dbReference type="PANTHER" id="PTHR43448:SF2">
    <property type="entry name" value="PROTOHEME IX FARNESYLTRANSFERASE, MITOCHONDRIAL"/>
    <property type="match status" value="1"/>
</dbReference>
<dbReference type="Pfam" id="PF01040">
    <property type="entry name" value="UbiA"/>
    <property type="match status" value="1"/>
</dbReference>
<comment type="function">
    <text evidence="1">Converts heme B (protoheme IX) to heme O by substitution of the vinyl group on carbon 2 of heme B porphyrin ring with a hydroxyethyl farnesyl side group.</text>
</comment>
<comment type="catalytic activity">
    <reaction evidence="1">
        <text>heme b + (2E,6E)-farnesyl diphosphate + H2O = Fe(II)-heme o + diphosphate</text>
        <dbReference type="Rhea" id="RHEA:28070"/>
        <dbReference type="ChEBI" id="CHEBI:15377"/>
        <dbReference type="ChEBI" id="CHEBI:33019"/>
        <dbReference type="ChEBI" id="CHEBI:60344"/>
        <dbReference type="ChEBI" id="CHEBI:60530"/>
        <dbReference type="ChEBI" id="CHEBI:175763"/>
        <dbReference type="EC" id="2.5.1.141"/>
    </reaction>
</comment>
<comment type="pathway">
    <text evidence="1">Porphyrin-containing compound metabolism; heme O biosynthesis; heme O from protoheme: step 1/1.</text>
</comment>
<comment type="subunit">
    <text evidence="1">Interacts with CtaA.</text>
</comment>
<comment type="subcellular location">
    <subcellularLocation>
        <location evidence="1">Cell membrane</location>
        <topology evidence="1">Multi-pass membrane protein</topology>
    </subcellularLocation>
</comment>
<comment type="miscellaneous">
    <text evidence="1">Carbon 2 of the heme B porphyrin ring is defined according to the Fischer nomenclature.</text>
</comment>
<comment type="similarity">
    <text evidence="1">Belongs to the UbiA prenyltransferase family. Protoheme IX farnesyltransferase subfamily.</text>
</comment>
<proteinExistence type="inferred from homology"/>
<evidence type="ECO:0000255" key="1">
    <source>
        <dbReference type="HAMAP-Rule" id="MF_00154"/>
    </source>
</evidence>
<feature type="chain" id="PRO_0000327165" description="Protoheme IX farnesyltransferase">
    <location>
        <begin position="1"/>
        <end position="303"/>
    </location>
</feature>
<feature type="transmembrane region" description="Helical" evidence="1">
    <location>
        <begin position="25"/>
        <end position="45"/>
    </location>
</feature>
<feature type="transmembrane region" description="Helical" evidence="1">
    <location>
        <begin position="54"/>
        <end position="74"/>
    </location>
</feature>
<feature type="transmembrane region" description="Helical" evidence="1">
    <location>
        <begin position="118"/>
        <end position="138"/>
    </location>
</feature>
<feature type="transmembrane region" description="Helical" evidence="1">
    <location>
        <begin position="166"/>
        <end position="186"/>
    </location>
</feature>
<feature type="transmembrane region" description="Helical" evidence="1">
    <location>
        <begin position="230"/>
        <end position="250"/>
    </location>
</feature>
<feature type="transmembrane region" description="Helical" evidence="1">
    <location>
        <begin position="280"/>
        <end position="300"/>
    </location>
</feature>
<accession>Q5HQ51</accession>